<feature type="chain" id="PRO_0000296682" description="PTB domain-containing engulfment adapter protein 1">
    <location>
        <begin position="1"/>
        <end position="300"/>
    </location>
</feature>
<feature type="domain" description="PID" evidence="3">
    <location>
        <begin position="21"/>
        <end position="176"/>
    </location>
</feature>
<feature type="coiled-coil region" evidence="2">
    <location>
        <begin position="160"/>
        <end position="199"/>
    </location>
</feature>
<feature type="splice variant" id="VSP_037975" description="In isoform 2." evidence="4">
    <original>P</original>
    <variation>PLLHINSSNEAYMLQRPSSLFWCHNVTSFSCLEISSVTLTPMSSPDSNLSAGLLTPPPTKPALSKPPGGASVPRHS</variation>
    <location>
        <position position="201"/>
    </location>
</feature>
<dbReference type="EMBL" id="AL732386">
    <property type="protein sequence ID" value="CAM13101.1"/>
    <property type="status" value="ALT_SEQ"/>
    <property type="molecule type" value="Genomic_DNA"/>
</dbReference>
<dbReference type="EMBL" id="CR752643">
    <property type="protein sequence ID" value="CAQ14641.1"/>
    <property type="molecule type" value="Genomic_DNA"/>
</dbReference>
<dbReference type="EMBL" id="BX640465">
    <property type="protein sequence ID" value="CAQ14641.1"/>
    <property type="status" value="JOINED"/>
    <property type="molecule type" value="Genomic_DNA"/>
</dbReference>
<dbReference type="EMBL" id="CR752643">
    <property type="protein sequence ID" value="CAQ14642.1"/>
    <property type="molecule type" value="Genomic_DNA"/>
</dbReference>
<dbReference type="EMBL" id="BX640465">
    <property type="protein sequence ID" value="CAQ14642.1"/>
    <property type="status" value="JOINED"/>
    <property type="molecule type" value="Genomic_DNA"/>
</dbReference>
<dbReference type="EMBL" id="BX640465">
    <property type="protein sequence ID" value="CAQ15243.1"/>
    <property type="molecule type" value="Genomic_DNA"/>
</dbReference>
<dbReference type="EMBL" id="CR752643">
    <property type="protein sequence ID" value="CAQ15243.1"/>
    <property type="status" value="JOINED"/>
    <property type="molecule type" value="Genomic_DNA"/>
</dbReference>
<dbReference type="EMBL" id="BX640465">
    <property type="protein sequence ID" value="CAQ15244.1"/>
    <property type="molecule type" value="Genomic_DNA"/>
</dbReference>
<dbReference type="EMBL" id="CR752643">
    <property type="protein sequence ID" value="CAQ15244.1"/>
    <property type="status" value="JOINED"/>
    <property type="molecule type" value="Genomic_DNA"/>
</dbReference>
<dbReference type="EMBL" id="BC107973">
    <property type="protein sequence ID" value="AAI07974.1"/>
    <property type="molecule type" value="mRNA"/>
</dbReference>
<dbReference type="RefSeq" id="NP_001007183.1">
    <molecule id="Q32PV0-1"/>
    <property type="nucleotide sequence ID" value="NM_001007182.3"/>
</dbReference>
<dbReference type="SMR" id="Q32PV0"/>
<dbReference type="FunCoup" id="Q32PV0">
    <property type="interactions" value="796"/>
</dbReference>
<dbReference type="STRING" id="7955.ENSDARP00000114797"/>
<dbReference type="Ensembl" id="ENSDART00000002027">
    <molecule id="Q32PV0-1"/>
    <property type="protein sequence ID" value="ENSDARP00000000920"/>
    <property type="gene ID" value="ENSDARG00000001733"/>
</dbReference>
<dbReference type="Ensembl" id="ENSDART00000191186">
    <molecule id="Q32PV0-1"/>
    <property type="protein sequence ID" value="ENSDARP00000156594"/>
    <property type="gene ID" value="ENSDARG00000001733"/>
</dbReference>
<dbReference type="Ensembl" id="ENSDART00000192224">
    <molecule id="Q32PV0-1"/>
    <property type="protein sequence ID" value="ENSDARP00000150288"/>
    <property type="gene ID" value="ENSDARG00000001733"/>
</dbReference>
<dbReference type="GeneID" id="368404"/>
<dbReference type="KEGG" id="dre:368404"/>
<dbReference type="AGR" id="ZFIN:ZDB-GENE-030616-21"/>
<dbReference type="CTD" id="368404"/>
<dbReference type="ZFIN" id="ZDB-GENE-030616-21">
    <property type="gene designation" value="gulp1a"/>
</dbReference>
<dbReference type="HOGENOM" id="CLU_024530_0_0_1"/>
<dbReference type="InParanoid" id="Q32PV0"/>
<dbReference type="OMA" id="XFARHIK"/>
<dbReference type="OrthoDB" id="10057585at2759"/>
<dbReference type="PhylomeDB" id="Q32PV0"/>
<dbReference type="TreeFam" id="TF314159"/>
<dbReference type="PRO" id="PR:Q32PV0"/>
<dbReference type="Proteomes" id="UP000000437">
    <property type="component" value="Chromosome 9"/>
</dbReference>
<dbReference type="Bgee" id="ENSDARG00000001733">
    <property type="expression patterns" value="Expressed in swim bladder and 30 other cell types or tissues"/>
</dbReference>
<dbReference type="GO" id="GO:0005737">
    <property type="term" value="C:cytoplasm"/>
    <property type="evidence" value="ECO:0007669"/>
    <property type="project" value="UniProtKB-SubCell"/>
</dbReference>
<dbReference type="GO" id="GO:0006915">
    <property type="term" value="P:apoptotic process"/>
    <property type="evidence" value="ECO:0007669"/>
    <property type="project" value="UniProtKB-KW"/>
</dbReference>
<dbReference type="GO" id="GO:0006909">
    <property type="term" value="P:phagocytosis"/>
    <property type="evidence" value="ECO:0007669"/>
    <property type="project" value="UniProtKB-KW"/>
</dbReference>
<dbReference type="CDD" id="cd01273">
    <property type="entry name" value="PTB_CED-6"/>
    <property type="match status" value="1"/>
</dbReference>
<dbReference type="FunFam" id="2.30.29.30:FF:000118">
    <property type="entry name" value="GULP PTB domain containing engulfment adaptor 1"/>
    <property type="match status" value="1"/>
</dbReference>
<dbReference type="Gene3D" id="2.30.29.30">
    <property type="entry name" value="Pleckstrin-homology domain (PH domain)/Phosphotyrosine-binding domain (PTB)"/>
    <property type="match status" value="1"/>
</dbReference>
<dbReference type="InterPro" id="IPR051133">
    <property type="entry name" value="Adapter_Engulfment-Domain"/>
</dbReference>
<dbReference type="InterPro" id="IPR011993">
    <property type="entry name" value="PH-like_dom_sf"/>
</dbReference>
<dbReference type="InterPro" id="IPR006020">
    <property type="entry name" value="PTB/PI_dom"/>
</dbReference>
<dbReference type="PANTHER" id="PTHR11232">
    <property type="entry name" value="PHOSPHOTYROSINE INTERACTION DOMAIN-CONTAINING FAMILY MEMBER"/>
    <property type="match status" value="1"/>
</dbReference>
<dbReference type="PANTHER" id="PTHR11232:SF70">
    <property type="entry name" value="PTB DOMAIN-CONTAINING ENGULFMENT ADAPTER PROTEIN 1-RELATED"/>
    <property type="match status" value="1"/>
</dbReference>
<dbReference type="Pfam" id="PF00640">
    <property type="entry name" value="PID"/>
    <property type="match status" value="1"/>
</dbReference>
<dbReference type="SMART" id="SM00462">
    <property type="entry name" value="PTB"/>
    <property type="match status" value="1"/>
</dbReference>
<dbReference type="SUPFAM" id="SSF50729">
    <property type="entry name" value="PH domain-like"/>
    <property type="match status" value="1"/>
</dbReference>
<dbReference type="PROSITE" id="PS01179">
    <property type="entry name" value="PID"/>
    <property type="match status" value="1"/>
</dbReference>
<organism>
    <name type="scientific">Danio rerio</name>
    <name type="common">Zebrafish</name>
    <name type="synonym">Brachydanio rerio</name>
    <dbReference type="NCBI Taxonomy" id="7955"/>
    <lineage>
        <taxon>Eukaryota</taxon>
        <taxon>Metazoa</taxon>
        <taxon>Chordata</taxon>
        <taxon>Craniata</taxon>
        <taxon>Vertebrata</taxon>
        <taxon>Euteleostomi</taxon>
        <taxon>Actinopterygii</taxon>
        <taxon>Neopterygii</taxon>
        <taxon>Teleostei</taxon>
        <taxon>Ostariophysi</taxon>
        <taxon>Cypriniformes</taxon>
        <taxon>Danionidae</taxon>
        <taxon>Danioninae</taxon>
        <taxon>Danio</taxon>
    </lineage>
</organism>
<accession>Q32PV0</accession>
<accession>A2AI65</accession>
<accession>B0S741</accession>
<accession>B0S742</accession>
<sequence length="300" mass="33860">MNRAFNRKKDKSWMHTPEALAKHFIPYNAKFLGNTEVDQPKGTEVVKDAVRKLKFQRHIKKSEGQKLPKVELQISIYGVKILDPKSKEVQYNCQLHRISFCADDKTDKRIFTFICKDSESNKHLCYVFDSEKCAEEITLTIGQAFDLAYKKFLESGGKDVETRKQIGGLQKRIQDLETENVELKKQLQVLEEQLMIAQVPPGNSMSSKSPTDIFDMVPFSPMTPLVPLPASNGSAPPPPARPTEIRRDLFGAEPFDPFTCGAADFPPDIQSKLDEMQEGFKMGLTVEGTVFSLDPLEGRC</sequence>
<comment type="function">
    <text evidence="1">May function as an adapter protein. Required for efficient phagocytosis of apoptotic cells. May play a role in the internalization and endosomal trafficking of various lrp1 ligands (By similarity).</text>
</comment>
<comment type="subcellular location">
    <subcellularLocation>
        <location evidence="1">Cytoplasm</location>
    </subcellularLocation>
</comment>
<comment type="alternative products">
    <event type="alternative splicing"/>
    <isoform>
        <id>Q32PV0-1</id>
        <name>1</name>
        <sequence type="displayed"/>
    </isoform>
    <isoform>
        <id>Q32PV0-2</id>
        <name>2</name>
        <sequence type="described" ref="VSP_037975"/>
    </isoform>
</comment>
<comment type="similarity">
    <text evidence="4">Belongs to the ced-6 family.</text>
</comment>
<comment type="sequence caution" evidence="4">
    <conflict type="erroneous gene model prediction">
        <sequence resource="EMBL-CDS" id="CAM13101"/>
    </conflict>
</comment>
<protein>
    <recommendedName>
        <fullName>PTB domain-containing engulfment adapter protein 1</fullName>
    </recommendedName>
    <alternativeName>
        <fullName>Cell death protein 6 homolog</fullName>
    </alternativeName>
    <alternativeName>
        <fullName>PTB domain adapter protein CED-6</fullName>
    </alternativeName>
</protein>
<evidence type="ECO:0000250" key="1"/>
<evidence type="ECO:0000255" key="2"/>
<evidence type="ECO:0000255" key="3">
    <source>
        <dbReference type="PROSITE-ProRule" id="PRU00148"/>
    </source>
</evidence>
<evidence type="ECO:0000305" key="4"/>
<keyword id="KW-0025">Alternative splicing</keyword>
<keyword id="KW-0053">Apoptosis</keyword>
<keyword id="KW-0175">Coiled coil</keyword>
<keyword id="KW-0963">Cytoplasm</keyword>
<keyword id="KW-0581">Phagocytosis</keyword>
<keyword id="KW-1185">Reference proteome</keyword>
<keyword id="KW-0813">Transport</keyword>
<proteinExistence type="evidence at transcript level"/>
<reference key="1">
    <citation type="journal article" date="2013" name="Nature">
        <title>The zebrafish reference genome sequence and its relationship to the human genome.</title>
        <authorList>
            <person name="Howe K."/>
            <person name="Clark M.D."/>
            <person name="Torroja C.F."/>
            <person name="Torrance J."/>
            <person name="Berthelot C."/>
            <person name="Muffato M."/>
            <person name="Collins J.E."/>
            <person name="Humphray S."/>
            <person name="McLaren K."/>
            <person name="Matthews L."/>
            <person name="McLaren S."/>
            <person name="Sealy I."/>
            <person name="Caccamo M."/>
            <person name="Churcher C."/>
            <person name="Scott C."/>
            <person name="Barrett J.C."/>
            <person name="Koch R."/>
            <person name="Rauch G.J."/>
            <person name="White S."/>
            <person name="Chow W."/>
            <person name="Kilian B."/>
            <person name="Quintais L.T."/>
            <person name="Guerra-Assuncao J.A."/>
            <person name="Zhou Y."/>
            <person name="Gu Y."/>
            <person name="Yen J."/>
            <person name="Vogel J.H."/>
            <person name="Eyre T."/>
            <person name="Redmond S."/>
            <person name="Banerjee R."/>
            <person name="Chi J."/>
            <person name="Fu B."/>
            <person name="Langley E."/>
            <person name="Maguire S.F."/>
            <person name="Laird G.K."/>
            <person name="Lloyd D."/>
            <person name="Kenyon E."/>
            <person name="Donaldson S."/>
            <person name="Sehra H."/>
            <person name="Almeida-King J."/>
            <person name="Loveland J."/>
            <person name="Trevanion S."/>
            <person name="Jones M."/>
            <person name="Quail M."/>
            <person name="Willey D."/>
            <person name="Hunt A."/>
            <person name="Burton J."/>
            <person name="Sims S."/>
            <person name="McLay K."/>
            <person name="Plumb B."/>
            <person name="Davis J."/>
            <person name="Clee C."/>
            <person name="Oliver K."/>
            <person name="Clark R."/>
            <person name="Riddle C."/>
            <person name="Elliot D."/>
            <person name="Threadgold G."/>
            <person name="Harden G."/>
            <person name="Ware D."/>
            <person name="Begum S."/>
            <person name="Mortimore B."/>
            <person name="Kerry G."/>
            <person name="Heath P."/>
            <person name="Phillimore B."/>
            <person name="Tracey A."/>
            <person name="Corby N."/>
            <person name="Dunn M."/>
            <person name="Johnson C."/>
            <person name="Wood J."/>
            <person name="Clark S."/>
            <person name="Pelan S."/>
            <person name="Griffiths G."/>
            <person name="Smith M."/>
            <person name="Glithero R."/>
            <person name="Howden P."/>
            <person name="Barker N."/>
            <person name="Lloyd C."/>
            <person name="Stevens C."/>
            <person name="Harley J."/>
            <person name="Holt K."/>
            <person name="Panagiotidis G."/>
            <person name="Lovell J."/>
            <person name="Beasley H."/>
            <person name="Henderson C."/>
            <person name="Gordon D."/>
            <person name="Auger K."/>
            <person name="Wright D."/>
            <person name="Collins J."/>
            <person name="Raisen C."/>
            <person name="Dyer L."/>
            <person name="Leung K."/>
            <person name="Robertson L."/>
            <person name="Ambridge K."/>
            <person name="Leongamornlert D."/>
            <person name="McGuire S."/>
            <person name="Gilderthorp R."/>
            <person name="Griffiths C."/>
            <person name="Manthravadi D."/>
            <person name="Nichol S."/>
            <person name="Barker G."/>
            <person name="Whitehead S."/>
            <person name="Kay M."/>
            <person name="Brown J."/>
            <person name="Murnane C."/>
            <person name="Gray E."/>
            <person name="Humphries M."/>
            <person name="Sycamore N."/>
            <person name="Barker D."/>
            <person name="Saunders D."/>
            <person name="Wallis J."/>
            <person name="Babbage A."/>
            <person name="Hammond S."/>
            <person name="Mashreghi-Mohammadi M."/>
            <person name="Barr L."/>
            <person name="Martin S."/>
            <person name="Wray P."/>
            <person name="Ellington A."/>
            <person name="Matthews N."/>
            <person name="Ellwood M."/>
            <person name="Woodmansey R."/>
            <person name="Clark G."/>
            <person name="Cooper J."/>
            <person name="Tromans A."/>
            <person name="Grafham D."/>
            <person name="Skuce C."/>
            <person name="Pandian R."/>
            <person name="Andrews R."/>
            <person name="Harrison E."/>
            <person name="Kimberley A."/>
            <person name="Garnett J."/>
            <person name="Fosker N."/>
            <person name="Hall R."/>
            <person name="Garner P."/>
            <person name="Kelly D."/>
            <person name="Bird C."/>
            <person name="Palmer S."/>
            <person name="Gehring I."/>
            <person name="Berger A."/>
            <person name="Dooley C.M."/>
            <person name="Ersan-Urun Z."/>
            <person name="Eser C."/>
            <person name="Geiger H."/>
            <person name="Geisler M."/>
            <person name="Karotki L."/>
            <person name="Kirn A."/>
            <person name="Konantz J."/>
            <person name="Konantz M."/>
            <person name="Oberlander M."/>
            <person name="Rudolph-Geiger S."/>
            <person name="Teucke M."/>
            <person name="Lanz C."/>
            <person name="Raddatz G."/>
            <person name="Osoegawa K."/>
            <person name="Zhu B."/>
            <person name="Rapp A."/>
            <person name="Widaa S."/>
            <person name="Langford C."/>
            <person name="Yang F."/>
            <person name="Schuster S.C."/>
            <person name="Carter N.P."/>
            <person name="Harrow J."/>
            <person name="Ning Z."/>
            <person name="Herrero J."/>
            <person name="Searle S.M."/>
            <person name="Enright A."/>
            <person name="Geisler R."/>
            <person name="Plasterk R.H."/>
            <person name="Lee C."/>
            <person name="Westerfield M."/>
            <person name="de Jong P.J."/>
            <person name="Zon L.I."/>
            <person name="Postlethwait J.H."/>
            <person name="Nusslein-Volhard C."/>
            <person name="Hubbard T.J."/>
            <person name="Roest Crollius H."/>
            <person name="Rogers J."/>
            <person name="Stemple D.L."/>
        </authorList>
    </citation>
    <scope>NUCLEOTIDE SEQUENCE [LARGE SCALE GENOMIC DNA]</scope>
    <source>
        <strain>Tuebingen</strain>
    </source>
</reference>
<reference key="2">
    <citation type="submission" date="2005-10" db="EMBL/GenBank/DDBJ databases">
        <authorList>
            <consortium name="NIH - Zebrafish Gene Collection (ZGC) project"/>
        </authorList>
    </citation>
    <scope>NUCLEOTIDE SEQUENCE [LARGE SCALE MRNA] (ISOFORM 1)</scope>
    <source>
        <tissue>Larva</tissue>
    </source>
</reference>
<gene>
    <name type="primary">gulp1</name>
    <name type="synonym">ced6</name>
    <name type="ORF">si:ch211-198b21.4</name>
    <name type="ORF">si:xx-35d8.1</name>
</gene>
<name>GULP1_DANRE</name>